<protein>
    <recommendedName>
        <fullName evidence="2">Cytosolic Fe-S cluster assembly factor NUBP2</fullName>
    </recommendedName>
    <alternativeName>
        <fullName evidence="2">Nucleotide-binding protein 2</fullName>
        <shortName evidence="2">NBP 2</shortName>
    </alternativeName>
</protein>
<organism>
    <name type="scientific">Homo sapiens</name>
    <name type="common">Human</name>
    <dbReference type="NCBI Taxonomy" id="9606"/>
    <lineage>
        <taxon>Eukaryota</taxon>
        <taxon>Metazoa</taxon>
        <taxon>Chordata</taxon>
        <taxon>Craniata</taxon>
        <taxon>Vertebrata</taxon>
        <taxon>Euteleostomi</taxon>
        <taxon>Mammalia</taxon>
        <taxon>Eutheria</taxon>
        <taxon>Euarchontoglires</taxon>
        <taxon>Primates</taxon>
        <taxon>Haplorrhini</taxon>
        <taxon>Catarrhini</taxon>
        <taxon>Hominidae</taxon>
        <taxon>Homo</taxon>
    </lineage>
</organism>
<name>NUBP2_HUMAN</name>
<keyword id="KW-0004">4Fe-4S</keyword>
<keyword id="KW-0007">Acetylation</keyword>
<keyword id="KW-0067">ATP-binding</keyword>
<keyword id="KW-0966">Cell projection</keyword>
<keyword id="KW-0969">Cilium</keyword>
<keyword id="KW-0970">Cilium biogenesis/degradation</keyword>
<keyword id="KW-0963">Cytoplasm</keyword>
<keyword id="KW-0206">Cytoskeleton</keyword>
<keyword id="KW-0903">Direct protein sequencing</keyword>
<keyword id="KW-0408">Iron</keyword>
<keyword id="KW-0411">Iron-sulfur</keyword>
<keyword id="KW-0479">Metal-binding</keyword>
<keyword id="KW-0547">Nucleotide-binding</keyword>
<keyword id="KW-0539">Nucleus</keyword>
<keyword id="KW-1267">Proteomics identification</keyword>
<keyword id="KW-1185">Reference proteome</keyword>
<comment type="function">
    <text evidence="1 2">Component of the cytosolic iron-sulfur (Fe/S) protein assembly (CIA) machinery. Required for maturation of extramitochondrial Fe-S proteins. The NUBP1-NUBP2 heterotetramer forms a Fe-S scaffold complex, mediating the de novo assembly of an Fe-S cluster and its transfer to target apoproteins. Negatively regulates cilium formation and structure.</text>
</comment>
<comment type="cofactor">
    <cofactor evidence="2">
        <name>[4Fe-4S] cluster</name>
        <dbReference type="ChEBI" id="CHEBI:49883"/>
    </cofactor>
    <text evidence="2">Binds 4 [4Fe-4S] clusters per heterotetramer. Contains two stable clusters in the N-termini of NUBP1 and two labile, bridging clusters between subunits of the NUBP1-NUBP2 heterotetramer.</text>
</comment>
<comment type="subunit">
    <text evidence="1 2 3">Heterotetramer of 2 NUBP1 and 2 NUBP2 chains (By similarity). Interacts with KIFC1 (By similarity). Interacts with NUBP1 (PubMed:18573874).</text>
</comment>
<comment type="interaction">
    <interactant intactId="EBI-1048886">
        <id>Q9Y5Y2</id>
    </interactant>
    <interactant intactId="EBI-3867333">
        <id>A8MQ03</id>
        <label>CYSRT1</label>
    </interactant>
    <organismsDiffer>false</organismsDiffer>
    <experiments>3</experiments>
</comment>
<comment type="interaction">
    <interactant intactId="EBI-1048886">
        <id>Q9Y5Y2</id>
    </interactant>
    <interactant intactId="EBI-6509505">
        <id>Q0VD86</id>
        <label>INCA1</label>
    </interactant>
    <organismsDiffer>false</organismsDiffer>
    <experiments>3</experiments>
</comment>
<comment type="interaction">
    <interactant intactId="EBI-1048886">
        <id>Q9Y5Y2</id>
    </interactant>
    <interactant intactId="EBI-11959885">
        <id>Q07627</id>
        <label>KRTAP1-1</label>
    </interactant>
    <organismsDiffer>false</organismsDiffer>
    <experiments>3</experiments>
</comment>
<comment type="interaction">
    <interactant intactId="EBI-1048886">
        <id>Q9Y5Y2</id>
    </interactant>
    <interactant intactId="EBI-10172290">
        <id>P60409</id>
        <label>KRTAP10-7</label>
    </interactant>
    <organismsDiffer>false</organismsDiffer>
    <experiments>3</experiments>
</comment>
<comment type="interaction">
    <interactant intactId="EBI-1048886">
        <id>Q9Y5Y2</id>
    </interactant>
    <interactant intactId="EBI-11958364">
        <id>Q9BYQ0</id>
        <label>KRTAP9-8</label>
    </interactant>
    <organismsDiffer>false</organismsDiffer>
    <experiments>3</experiments>
</comment>
<comment type="interaction">
    <interactant intactId="EBI-1048886">
        <id>Q9Y5Y2</id>
    </interactant>
    <interactant intactId="EBI-724076">
        <id>Q99750</id>
        <label>MDFI</label>
    </interactant>
    <organismsDiffer>false</organismsDiffer>
    <experiments>3</experiments>
</comment>
<comment type="interaction">
    <interactant intactId="EBI-1048886">
        <id>Q9Y5Y2</id>
    </interactant>
    <interactant intactId="EBI-945833">
        <id>Q7Z3S9</id>
        <label>NOTCH2NLA</label>
    </interactant>
    <organismsDiffer>false</organismsDiffer>
    <experiments>3</experiments>
</comment>
<comment type="interaction">
    <interactant intactId="EBI-1048886">
        <id>Q9Y5Y2</id>
    </interactant>
    <interactant intactId="EBI-7391727">
        <id>P53384</id>
        <label>NUBP1</label>
    </interactant>
    <organismsDiffer>false</organismsDiffer>
    <experiments>2</experiments>
</comment>
<comment type="interaction">
    <interactant intactId="EBI-1048886">
        <id>Q9Y5Y2</id>
    </interactant>
    <interactant intactId="EBI-12852610">
        <id>Q8TB37</id>
        <label>NUBPL</label>
    </interactant>
    <organismsDiffer>false</organismsDiffer>
    <experiments>6</experiments>
</comment>
<comment type="interaction">
    <interactant intactId="EBI-1048886">
        <id>Q9Y5Y2</id>
    </interactant>
    <interactant intactId="EBI-2562368">
        <id>P22735</id>
        <label>TGM1</label>
    </interactant>
    <organismsDiffer>false</organismsDiffer>
    <experiments>3</experiments>
</comment>
<comment type="interaction">
    <interactant intactId="EBI-1048886">
        <id>Q9Y5Y2</id>
    </interactant>
    <interactant intactId="EBI-949753">
        <id>Q63HR2</id>
        <label>TNS2</label>
    </interactant>
    <organismsDiffer>false</organismsDiffer>
    <experiments>3</experiments>
</comment>
<comment type="subcellular location">
    <subcellularLocation>
        <location evidence="2">Nucleus</location>
    </subcellularLocation>
    <subcellularLocation>
        <location evidence="2">Cytoplasm</location>
        <location evidence="2">Cytoskeleton</location>
        <location evidence="2">Microtubule organizing center</location>
        <location evidence="2">Centrosome</location>
    </subcellularLocation>
    <subcellularLocation>
        <location evidence="4">Cytoplasm</location>
    </subcellularLocation>
    <subcellularLocation>
        <location evidence="1">Cytoplasm</location>
        <location evidence="1">Cytoskeleton</location>
        <location evidence="1">Cilium axoneme</location>
    </subcellularLocation>
    <subcellularLocation>
        <location evidence="1">Cytoplasm</location>
        <location evidence="1">Cytoskeleton</location>
        <location evidence="1">Microtubule organizing center</location>
        <location evidence="1">Centrosome</location>
        <location evidence="1">Centriole</location>
    </subcellularLocation>
    <subcellularLocation>
        <location evidence="1">Cytoplasm</location>
        <location evidence="1">Cytoskeleton</location>
        <location evidence="1">Microtubule organizing center</location>
    </subcellularLocation>
    <text evidence="1 2">Enriched at the centrosomes during mitosis. Enriched in centrioles of microtubule asters during prophase, prometaphase and telophase stages of mitosis (By similarity). Localized at centrioles and in the nucleus at interphase (By similarity). Colocalizes with nubp-1 at prometaphase (By similarity).</text>
</comment>
<comment type="tissue specificity">
    <text>Widely expressed with highest expression in skeletal muscle.</text>
</comment>
<comment type="developmental stage">
    <text>Expressed in fetal brain, lung, liver and kidney.</text>
</comment>
<comment type="similarity">
    <text evidence="2">Belongs to the Mrp/NBP35 ATP-binding proteins family. NUBP2/CFD1 subfamily.</text>
</comment>
<sequence>MEAAAEPGNLAGVRHIILVLSGKGGVGKSTISTELALALRHAGKKVGILDVDLCGPSIPRMLGAQGRAVHQCDRGWAPVFLDREQSISLMSVGFLLEKPDEAVVWRGPKKNALIKQFVSDVAWGELDYLVVDTPPGTSDEHMATIEALRPYQPLGALVVTTPQAVSVGDVRRELTFCRKTGLRVMGIVENMSGFTCPHCTECTSVFSRGGGEELAQLAGVPFLGSVPLDPALMRTLEEGHDFIQEFPGSPAFAALTSIAQKILDATPACLP</sequence>
<accession>Q9Y5Y2</accession>
<accession>D3DU80</accession>
<accession>Q9NWB2</accession>
<reference key="1">
    <citation type="journal article" date="1999" name="Genomics">
        <title>Two novel mouse genes -- Nubp2, mapped to the T-complex on chromosome 17, and Nubp1, mapped to chromosome 16 -- establish a new gene family of nucleotide-binding proteins in eukaryotes.</title>
        <authorList>
            <person name="Nakashima H."/>
            <person name="Grahovac M.J."/>
            <person name="Mazzarella R."/>
            <person name="Fujiwara H."/>
            <person name="Kitchen J.R."/>
            <person name="Threat T.A."/>
            <person name="Ko M.S.H."/>
        </authorList>
    </citation>
    <scope>NUCLEOTIDE SEQUENCE [MRNA]</scope>
    <source>
        <tissue>Teratocarcinoma</tissue>
    </source>
</reference>
<reference key="2">
    <citation type="journal article" date="2004" name="Nat. Genet.">
        <title>Complete sequencing and characterization of 21,243 full-length human cDNAs.</title>
        <authorList>
            <person name="Ota T."/>
            <person name="Suzuki Y."/>
            <person name="Nishikawa T."/>
            <person name="Otsuki T."/>
            <person name="Sugiyama T."/>
            <person name="Irie R."/>
            <person name="Wakamatsu A."/>
            <person name="Hayashi K."/>
            <person name="Sato H."/>
            <person name="Nagai K."/>
            <person name="Kimura K."/>
            <person name="Makita H."/>
            <person name="Sekine M."/>
            <person name="Obayashi M."/>
            <person name="Nishi T."/>
            <person name="Shibahara T."/>
            <person name="Tanaka T."/>
            <person name="Ishii S."/>
            <person name="Yamamoto J."/>
            <person name="Saito K."/>
            <person name="Kawai Y."/>
            <person name="Isono Y."/>
            <person name="Nakamura Y."/>
            <person name="Nagahari K."/>
            <person name="Murakami K."/>
            <person name="Yasuda T."/>
            <person name="Iwayanagi T."/>
            <person name="Wagatsuma M."/>
            <person name="Shiratori A."/>
            <person name="Sudo H."/>
            <person name="Hosoiri T."/>
            <person name="Kaku Y."/>
            <person name="Kodaira H."/>
            <person name="Kondo H."/>
            <person name="Sugawara M."/>
            <person name="Takahashi M."/>
            <person name="Kanda K."/>
            <person name="Yokoi T."/>
            <person name="Furuya T."/>
            <person name="Kikkawa E."/>
            <person name="Omura Y."/>
            <person name="Abe K."/>
            <person name="Kamihara K."/>
            <person name="Katsuta N."/>
            <person name="Sato K."/>
            <person name="Tanikawa M."/>
            <person name="Yamazaki M."/>
            <person name="Ninomiya K."/>
            <person name="Ishibashi T."/>
            <person name="Yamashita H."/>
            <person name="Murakawa K."/>
            <person name="Fujimori K."/>
            <person name="Tanai H."/>
            <person name="Kimata M."/>
            <person name="Watanabe M."/>
            <person name="Hiraoka S."/>
            <person name="Chiba Y."/>
            <person name="Ishida S."/>
            <person name="Ono Y."/>
            <person name="Takiguchi S."/>
            <person name="Watanabe S."/>
            <person name="Yosida M."/>
            <person name="Hotuta T."/>
            <person name="Kusano J."/>
            <person name="Kanehori K."/>
            <person name="Takahashi-Fujii A."/>
            <person name="Hara H."/>
            <person name="Tanase T.-O."/>
            <person name="Nomura Y."/>
            <person name="Togiya S."/>
            <person name="Komai F."/>
            <person name="Hara R."/>
            <person name="Takeuchi K."/>
            <person name="Arita M."/>
            <person name="Imose N."/>
            <person name="Musashino K."/>
            <person name="Yuuki H."/>
            <person name="Oshima A."/>
            <person name="Sasaki N."/>
            <person name="Aotsuka S."/>
            <person name="Yoshikawa Y."/>
            <person name="Matsunawa H."/>
            <person name="Ichihara T."/>
            <person name="Shiohata N."/>
            <person name="Sano S."/>
            <person name="Moriya S."/>
            <person name="Momiyama H."/>
            <person name="Satoh N."/>
            <person name="Takami S."/>
            <person name="Terashima Y."/>
            <person name="Suzuki O."/>
            <person name="Nakagawa S."/>
            <person name="Senoh A."/>
            <person name="Mizoguchi H."/>
            <person name="Goto Y."/>
            <person name="Shimizu F."/>
            <person name="Wakebe H."/>
            <person name="Hishigaki H."/>
            <person name="Watanabe T."/>
            <person name="Sugiyama A."/>
            <person name="Takemoto M."/>
            <person name="Kawakami B."/>
            <person name="Yamazaki M."/>
            <person name="Watanabe K."/>
            <person name="Kumagai A."/>
            <person name="Itakura S."/>
            <person name="Fukuzumi Y."/>
            <person name="Fujimori Y."/>
            <person name="Komiyama M."/>
            <person name="Tashiro H."/>
            <person name="Tanigami A."/>
            <person name="Fujiwara T."/>
            <person name="Ono T."/>
            <person name="Yamada K."/>
            <person name="Fujii Y."/>
            <person name="Ozaki K."/>
            <person name="Hirao M."/>
            <person name="Ohmori Y."/>
            <person name="Kawabata A."/>
            <person name="Hikiji T."/>
            <person name="Kobatake N."/>
            <person name="Inagaki H."/>
            <person name="Ikema Y."/>
            <person name="Okamoto S."/>
            <person name="Okitani R."/>
            <person name="Kawakami T."/>
            <person name="Noguchi S."/>
            <person name="Itoh T."/>
            <person name="Shigeta K."/>
            <person name="Senba T."/>
            <person name="Matsumura K."/>
            <person name="Nakajima Y."/>
            <person name="Mizuno T."/>
            <person name="Morinaga M."/>
            <person name="Sasaki M."/>
            <person name="Togashi T."/>
            <person name="Oyama M."/>
            <person name="Hata H."/>
            <person name="Watanabe M."/>
            <person name="Komatsu T."/>
            <person name="Mizushima-Sugano J."/>
            <person name="Satoh T."/>
            <person name="Shirai Y."/>
            <person name="Takahashi Y."/>
            <person name="Nakagawa K."/>
            <person name="Okumura K."/>
            <person name="Nagase T."/>
            <person name="Nomura N."/>
            <person name="Kikuchi H."/>
            <person name="Masuho Y."/>
            <person name="Yamashita R."/>
            <person name="Nakai K."/>
            <person name="Yada T."/>
            <person name="Nakamura Y."/>
            <person name="Ohara O."/>
            <person name="Isogai T."/>
            <person name="Sugano S."/>
        </authorList>
    </citation>
    <scope>NUCLEOTIDE SEQUENCE [LARGE SCALE MRNA]</scope>
    <source>
        <tissue>Embryo</tissue>
    </source>
</reference>
<reference key="3">
    <citation type="submission" date="2005-09" db="EMBL/GenBank/DDBJ databases">
        <authorList>
            <person name="Mural R.J."/>
            <person name="Istrail S."/>
            <person name="Sutton G.G."/>
            <person name="Florea L."/>
            <person name="Halpern A.L."/>
            <person name="Mobarry C.M."/>
            <person name="Lippert R."/>
            <person name="Walenz B."/>
            <person name="Shatkay H."/>
            <person name="Dew I."/>
            <person name="Miller J.R."/>
            <person name="Flanigan M.J."/>
            <person name="Edwards N.J."/>
            <person name="Bolanos R."/>
            <person name="Fasulo D."/>
            <person name="Halldorsson B.V."/>
            <person name="Hannenhalli S."/>
            <person name="Turner R."/>
            <person name="Yooseph S."/>
            <person name="Lu F."/>
            <person name="Nusskern D.R."/>
            <person name="Shue B.C."/>
            <person name="Zheng X.H."/>
            <person name="Zhong F."/>
            <person name="Delcher A.L."/>
            <person name="Huson D.H."/>
            <person name="Kravitz S.A."/>
            <person name="Mouchard L."/>
            <person name="Reinert K."/>
            <person name="Remington K.A."/>
            <person name="Clark A.G."/>
            <person name="Waterman M.S."/>
            <person name="Eichler E.E."/>
            <person name="Adams M.D."/>
            <person name="Hunkapiller M.W."/>
            <person name="Myers E.W."/>
            <person name="Venter J.C."/>
        </authorList>
    </citation>
    <scope>NUCLEOTIDE SEQUENCE [LARGE SCALE GENOMIC DNA]</scope>
</reference>
<reference key="4">
    <citation type="journal article" date="2004" name="Genome Res.">
        <title>The status, quality, and expansion of the NIH full-length cDNA project: the Mammalian Gene Collection (MGC).</title>
        <authorList>
            <consortium name="The MGC Project Team"/>
        </authorList>
    </citation>
    <scope>NUCLEOTIDE SEQUENCE [LARGE SCALE MRNA]</scope>
    <source>
        <tissue>Brain</tissue>
        <tissue>Ovary</tissue>
    </source>
</reference>
<reference key="5">
    <citation type="journal article" date="2008" name="Mol. Cell. Biol.">
        <title>Human Nbp35 is essential for both cytosolic iron-sulfur protein assembly and iron homeostasis.</title>
        <authorList>
            <person name="Stehling O."/>
            <person name="Netz D.J.A."/>
            <person name="Niggemeyer B."/>
            <person name="Roesser R."/>
            <person name="Eisenstein R.S."/>
            <person name="Puccio H."/>
            <person name="Pierik A.J."/>
            <person name="Lill R."/>
        </authorList>
    </citation>
    <scope>INTERACTION WITH NUBP1</scope>
</reference>
<reference key="6">
    <citation type="submission" date="2009-03" db="UniProtKB">
        <authorList>
            <person name="Bienvenut W.V."/>
            <person name="Waridel P."/>
            <person name="Quadroni M."/>
        </authorList>
    </citation>
    <scope>PROTEIN SEQUENCE OF 1-14; 29-40; 45-60; 75-83 AND 209-261</scope>
    <scope>ACETYLATION AT MET-1</scope>
    <scope>IDENTIFICATION BY MASS SPECTROMETRY</scope>
    <source>
        <tissue>Embryonic kidney</tissue>
    </source>
</reference>
<reference key="7">
    <citation type="journal article" date="2009" name="Anal. Chem.">
        <title>Lys-N and trypsin cover complementary parts of the phosphoproteome in a refined SCX-based approach.</title>
        <authorList>
            <person name="Gauci S."/>
            <person name="Helbig A.O."/>
            <person name="Slijper M."/>
            <person name="Krijgsveld J."/>
            <person name="Heck A.J."/>
            <person name="Mohammed S."/>
        </authorList>
    </citation>
    <scope>ACETYLATION [LARGE SCALE ANALYSIS] AT MET-1</scope>
    <scope>IDENTIFICATION BY MASS SPECTROMETRY [LARGE SCALE ANALYSIS]</scope>
</reference>
<reference key="8">
    <citation type="journal article" date="2011" name="BMC Syst. Biol.">
        <title>Initial characterization of the human central proteome.</title>
        <authorList>
            <person name="Burkard T.R."/>
            <person name="Planyavsky M."/>
            <person name="Kaupe I."/>
            <person name="Breitwieser F.P."/>
            <person name="Buerckstuemmer T."/>
            <person name="Bennett K.L."/>
            <person name="Superti-Furga G."/>
            <person name="Colinge J."/>
        </authorList>
    </citation>
    <scope>IDENTIFICATION BY MASS SPECTROMETRY [LARGE SCALE ANALYSIS]</scope>
</reference>
<reference key="9">
    <citation type="journal article" date="2012" name="Mol. Cell. Proteomics">
        <title>Comparative large-scale characterisation of plant vs. mammal proteins reveals similar and idiosyncratic N-alpha acetylation features.</title>
        <authorList>
            <person name="Bienvenut W.V."/>
            <person name="Sumpton D."/>
            <person name="Martinez A."/>
            <person name="Lilla S."/>
            <person name="Espagne C."/>
            <person name="Meinnel T."/>
            <person name="Giglione C."/>
        </authorList>
    </citation>
    <scope>ACETYLATION [LARGE SCALE ANALYSIS] AT MET-1</scope>
    <scope>IDENTIFICATION BY MASS SPECTROMETRY [LARGE SCALE ANALYSIS]</scope>
</reference>
<reference key="10">
    <citation type="journal article" date="2012" name="Proc. Natl. Acad. Sci. U.S.A.">
        <title>N-terminal acetylome analyses and functional insights of the N-terminal acetyltransferase NatB.</title>
        <authorList>
            <person name="Van Damme P."/>
            <person name="Lasa M."/>
            <person name="Polevoda B."/>
            <person name="Gazquez C."/>
            <person name="Elosegui-Artola A."/>
            <person name="Kim D.S."/>
            <person name="De Juan-Pardo E."/>
            <person name="Demeyer K."/>
            <person name="Hole K."/>
            <person name="Larrea E."/>
            <person name="Timmerman E."/>
            <person name="Prieto J."/>
            <person name="Arnesen T."/>
            <person name="Sherman F."/>
            <person name="Gevaert K."/>
            <person name="Aldabe R."/>
        </authorList>
    </citation>
    <scope>ACETYLATION [LARGE SCALE ANALYSIS] AT MET-1</scope>
    <scope>IDENTIFICATION BY MASS SPECTROMETRY [LARGE SCALE ANALYSIS]</scope>
</reference>
<reference key="11">
    <citation type="journal article" date="2015" name="Proteomics">
        <title>N-terminome analysis of the human mitochondrial proteome.</title>
        <authorList>
            <person name="Vaca Jacome A.S."/>
            <person name="Rabilloud T."/>
            <person name="Schaeffer-Reiss C."/>
            <person name="Rompais M."/>
            <person name="Ayoub D."/>
            <person name="Lane L."/>
            <person name="Bairoch A."/>
            <person name="Van Dorsselaer A."/>
            <person name="Carapito C."/>
        </authorList>
    </citation>
    <scope>IDENTIFICATION BY MASS SPECTROMETRY [LARGE SCALE ANALYSIS]</scope>
</reference>
<reference key="12">
    <citation type="journal article" date="2018" name="J. Cell Sci.">
        <title>Fe-S cluster coordination of the chromokinesin KIF4A alters its subcellular localization during mitosis.</title>
        <authorList>
            <person name="Ben-Shimon L."/>
            <person name="Paul V.D."/>
            <person name="David-Kadoch G."/>
            <person name="Volpe M."/>
            <person name="Stuempfig M."/>
            <person name="Bill E."/>
            <person name="Muehlenhoff U."/>
            <person name="Lill R."/>
            <person name="Ben-Aroya S."/>
        </authorList>
    </citation>
    <scope>SUBCELLULAR LOCATION</scope>
</reference>
<dbReference type="EMBL" id="AF118394">
    <property type="protein sequence ID" value="AAD45242.1"/>
    <property type="molecule type" value="mRNA"/>
</dbReference>
<dbReference type="EMBL" id="AK001023">
    <property type="protein sequence ID" value="BAA91471.1"/>
    <property type="molecule type" value="mRNA"/>
</dbReference>
<dbReference type="EMBL" id="CH471112">
    <property type="protein sequence ID" value="EAW85613.1"/>
    <property type="molecule type" value="Genomic_DNA"/>
</dbReference>
<dbReference type="EMBL" id="CH471112">
    <property type="protein sequence ID" value="EAW85617.1"/>
    <property type="molecule type" value="Genomic_DNA"/>
</dbReference>
<dbReference type="EMBL" id="BC002768">
    <property type="protein sequence ID" value="AAH02768.1"/>
    <property type="molecule type" value="mRNA"/>
</dbReference>
<dbReference type="EMBL" id="BC008005">
    <property type="protein sequence ID" value="AAH08005.1"/>
    <property type="molecule type" value="mRNA"/>
</dbReference>
<dbReference type="CCDS" id="CCDS10445.1"/>
<dbReference type="RefSeq" id="NP_001271430.1">
    <property type="nucleotide sequence ID" value="NM_001284501.1"/>
</dbReference>
<dbReference type="RefSeq" id="NP_036357.1">
    <property type="nucleotide sequence ID" value="NM_012225.4"/>
</dbReference>
<dbReference type="SMR" id="Q9Y5Y2"/>
<dbReference type="BioGRID" id="115408">
    <property type="interactions" value="192"/>
</dbReference>
<dbReference type="ComplexPortal" id="CPX-2823">
    <property type="entry name" value="NUBP1-NUBP2 iron-sulfur cluster assembly scaffold complex"/>
</dbReference>
<dbReference type="CORUM" id="Q9Y5Y2"/>
<dbReference type="FunCoup" id="Q9Y5Y2">
    <property type="interactions" value="843"/>
</dbReference>
<dbReference type="IntAct" id="Q9Y5Y2">
    <property type="interactions" value="86"/>
</dbReference>
<dbReference type="MINT" id="Q9Y5Y2"/>
<dbReference type="STRING" id="9606.ENSP00000262302"/>
<dbReference type="GlyCosmos" id="Q9Y5Y2">
    <property type="glycosylation" value="2 sites, 1 glycan"/>
</dbReference>
<dbReference type="GlyGen" id="Q9Y5Y2">
    <property type="glycosylation" value="2 sites, 1 O-linked glycan (2 sites)"/>
</dbReference>
<dbReference type="iPTMnet" id="Q9Y5Y2"/>
<dbReference type="PhosphoSitePlus" id="Q9Y5Y2"/>
<dbReference type="BioMuta" id="NUBP2"/>
<dbReference type="DMDM" id="13632176"/>
<dbReference type="jPOST" id="Q9Y5Y2"/>
<dbReference type="MassIVE" id="Q9Y5Y2"/>
<dbReference type="PaxDb" id="9606-ENSP00000262302"/>
<dbReference type="PeptideAtlas" id="Q9Y5Y2"/>
<dbReference type="ProteomicsDB" id="86538"/>
<dbReference type="Pumba" id="Q9Y5Y2"/>
<dbReference type="Antibodypedia" id="23260">
    <property type="antibodies" value="85 antibodies from 19 providers"/>
</dbReference>
<dbReference type="DNASU" id="10101"/>
<dbReference type="Ensembl" id="ENST00000262302.14">
    <property type="protein sequence ID" value="ENSP00000262302.9"/>
    <property type="gene ID" value="ENSG00000095906.17"/>
</dbReference>
<dbReference type="GeneID" id="10101"/>
<dbReference type="KEGG" id="hsa:10101"/>
<dbReference type="MANE-Select" id="ENST00000262302.14">
    <property type="protein sequence ID" value="ENSP00000262302.9"/>
    <property type="RefSeq nucleotide sequence ID" value="NM_012225.4"/>
    <property type="RefSeq protein sequence ID" value="NP_036357.1"/>
</dbReference>
<dbReference type="UCSC" id="uc002cmw.6">
    <property type="organism name" value="human"/>
</dbReference>
<dbReference type="AGR" id="HGNC:8042"/>
<dbReference type="CTD" id="10101"/>
<dbReference type="GeneCards" id="NUBP2"/>
<dbReference type="HGNC" id="HGNC:8042">
    <property type="gene designation" value="NUBP2"/>
</dbReference>
<dbReference type="HPA" id="ENSG00000095906">
    <property type="expression patterns" value="Low tissue specificity"/>
</dbReference>
<dbReference type="MIM" id="610779">
    <property type="type" value="gene"/>
</dbReference>
<dbReference type="neXtProt" id="NX_Q9Y5Y2"/>
<dbReference type="OpenTargets" id="ENSG00000095906"/>
<dbReference type="PharmGKB" id="PA31824"/>
<dbReference type="VEuPathDB" id="HostDB:ENSG00000095906"/>
<dbReference type="eggNOG" id="KOG3022">
    <property type="taxonomic scope" value="Eukaryota"/>
</dbReference>
<dbReference type="GeneTree" id="ENSGT00950000183193"/>
<dbReference type="HOGENOM" id="CLU_024839_0_1_1"/>
<dbReference type="InParanoid" id="Q9Y5Y2"/>
<dbReference type="OMA" id="WIPVFAD"/>
<dbReference type="OrthoDB" id="1741334at2759"/>
<dbReference type="PAN-GO" id="Q9Y5Y2">
    <property type="GO annotations" value="3 GO annotations based on evolutionary models"/>
</dbReference>
<dbReference type="PhylomeDB" id="Q9Y5Y2"/>
<dbReference type="TreeFam" id="TF354321"/>
<dbReference type="PathwayCommons" id="Q9Y5Y2"/>
<dbReference type="Reactome" id="R-HSA-2564830">
    <property type="pathway name" value="Cytosolic iron-sulfur cluster assembly"/>
</dbReference>
<dbReference type="SignaLink" id="Q9Y5Y2"/>
<dbReference type="BioGRID-ORCS" id="10101">
    <property type="hits" value="601 hits in 1180 CRISPR screens"/>
</dbReference>
<dbReference type="ChiTaRS" id="NUBP2">
    <property type="organism name" value="human"/>
</dbReference>
<dbReference type="GeneWiki" id="NUBP2"/>
<dbReference type="GenomeRNAi" id="10101"/>
<dbReference type="Pharos" id="Q9Y5Y2">
    <property type="development level" value="Tbio"/>
</dbReference>
<dbReference type="PRO" id="PR:Q9Y5Y2"/>
<dbReference type="Proteomes" id="UP000005640">
    <property type="component" value="Chromosome 16"/>
</dbReference>
<dbReference type="RNAct" id="Q9Y5Y2">
    <property type="molecule type" value="protein"/>
</dbReference>
<dbReference type="Bgee" id="ENSG00000095906">
    <property type="expression patterns" value="Expressed in thymus and 103 other cell types or tissues"/>
</dbReference>
<dbReference type="ExpressionAtlas" id="Q9Y5Y2">
    <property type="expression patterns" value="baseline and differential"/>
</dbReference>
<dbReference type="GO" id="GO:0005814">
    <property type="term" value="C:centriole"/>
    <property type="evidence" value="ECO:0007669"/>
    <property type="project" value="UniProtKB-SubCell"/>
</dbReference>
<dbReference type="GO" id="GO:0005929">
    <property type="term" value="C:cilium"/>
    <property type="evidence" value="ECO:0007669"/>
    <property type="project" value="UniProtKB-KW"/>
</dbReference>
<dbReference type="GO" id="GO:0005829">
    <property type="term" value="C:cytosol"/>
    <property type="evidence" value="ECO:0000314"/>
    <property type="project" value="HPA"/>
</dbReference>
<dbReference type="GO" id="GO:0005654">
    <property type="term" value="C:nucleoplasm"/>
    <property type="evidence" value="ECO:0000314"/>
    <property type="project" value="HPA"/>
</dbReference>
<dbReference type="GO" id="GO:0031616">
    <property type="term" value="C:spindle pole centrosome"/>
    <property type="evidence" value="ECO:0007669"/>
    <property type="project" value="Ensembl"/>
</dbReference>
<dbReference type="GO" id="GO:0051539">
    <property type="term" value="F:4 iron, 4 sulfur cluster binding"/>
    <property type="evidence" value="ECO:0007669"/>
    <property type="project" value="UniProtKB-UniRule"/>
</dbReference>
<dbReference type="GO" id="GO:0005524">
    <property type="term" value="F:ATP binding"/>
    <property type="evidence" value="ECO:0007669"/>
    <property type="project" value="UniProtKB-KW"/>
</dbReference>
<dbReference type="GO" id="GO:0140663">
    <property type="term" value="F:ATP-dependent FeS chaperone activity"/>
    <property type="evidence" value="ECO:0007669"/>
    <property type="project" value="InterPro"/>
</dbReference>
<dbReference type="GO" id="GO:0051536">
    <property type="term" value="F:iron-sulfur cluster binding"/>
    <property type="evidence" value="ECO:0000318"/>
    <property type="project" value="GO_Central"/>
</dbReference>
<dbReference type="GO" id="GO:0046872">
    <property type="term" value="F:metal ion binding"/>
    <property type="evidence" value="ECO:0007669"/>
    <property type="project" value="UniProtKB-KW"/>
</dbReference>
<dbReference type="GO" id="GO:0000166">
    <property type="term" value="F:nucleotide binding"/>
    <property type="evidence" value="ECO:0000304"/>
    <property type="project" value="ProtInc"/>
</dbReference>
<dbReference type="GO" id="GO:0030030">
    <property type="term" value="P:cell projection organization"/>
    <property type="evidence" value="ECO:0007669"/>
    <property type="project" value="UniProtKB-KW"/>
</dbReference>
<dbReference type="GO" id="GO:0016226">
    <property type="term" value="P:iron-sulfur cluster assembly"/>
    <property type="evidence" value="ECO:0000318"/>
    <property type="project" value="GO_Central"/>
</dbReference>
<dbReference type="CDD" id="cd02037">
    <property type="entry name" value="Mrp_NBP35"/>
    <property type="match status" value="1"/>
</dbReference>
<dbReference type="FunFam" id="3.40.50.300:FF:000796">
    <property type="entry name" value="Cytosolic Fe-S cluster assembly factor NUBP2"/>
    <property type="match status" value="1"/>
</dbReference>
<dbReference type="Gene3D" id="3.40.50.300">
    <property type="entry name" value="P-loop containing nucleotide triphosphate hydrolases"/>
    <property type="match status" value="1"/>
</dbReference>
<dbReference type="HAMAP" id="MF_02040">
    <property type="entry name" value="Mrp_NBP35"/>
    <property type="match status" value="1"/>
</dbReference>
<dbReference type="HAMAP" id="MF_03039">
    <property type="entry name" value="NUBP2"/>
    <property type="match status" value="1"/>
</dbReference>
<dbReference type="InterPro" id="IPR000808">
    <property type="entry name" value="Mrp-like_CS"/>
</dbReference>
<dbReference type="InterPro" id="IPR019591">
    <property type="entry name" value="Mrp/NBP35_ATP-bd"/>
</dbReference>
<dbReference type="InterPro" id="IPR028600">
    <property type="entry name" value="NUBP2/Cfd1_eukaryotes"/>
</dbReference>
<dbReference type="InterPro" id="IPR027417">
    <property type="entry name" value="P-loop_NTPase"/>
</dbReference>
<dbReference type="InterPro" id="IPR033756">
    <property type="entry name" value="YlxH/NBP35"/>
</dbReference>
<dbReference type="PANTHER" id="PTHR23264:SF19">
    <property type="entry name" value="CYTOSOLIC FE-S CLUSTER ASSEMBLY FACTOR NUBP2"/>
    <property type="match status" value="1"/>
</dbReference>
<dbReference type="PANTHER" id="PTHR23264">
    <property type="entry name" value="NUCLEOTIDE-BINDING PROTEIN NBP35 YEAST -RELATED"/>
    <property type="match status" value="1"/>
</dbReference>
<dbReference type="Pfam" id="PF10609">
    <property type="entry name" value="ParA"/>
    <property type="match status" value="1"/>
</dbReference>
<dbReference type="SUPFAM" id="SSF52540">
    <property type="entry name" value="P-loop containing nucleoside triphosphate hydrolases"/>
    <property type="match status" value="1"/>
</dbReference>
<dbReference type="PROSITE" id="PS01215">
    <property type="entry name" value="MRP"/>
    <property type="match status" value="1"/>
</dbReference>
<proteinExistence type="evidence at protein level"/>
<feature type="chain" id="PRO_0000184945" description="Cytosolic Fe-S cluster assembly factor NUBP2">
    <location>
        <begin position="1"/>
        <end position="271"/>
    </location>
</feature>
<feature type="binding site" evidence="2">
    <location>
        <begin position="22"/>
        <end position="29"/>
    </location>
    <ligand>
        <name>ATP</name>
        <dbReference type="ChEBI" id="CHEBI:30616"/>
    </ligand>
</feature>
<feature type="binding site" evidence="2">
    <location>
        <position position="196"/>
    </location>
    <ligand>
        <name>[4Fe-4S] cluster</name>
        <dbReference type="ChEBI" id="CHEBI:49883"/>
        <note>ligand shared between dimeric partners</note>
    </ligand>
</feature>
<feature type="binding site" evidence="2">
    <location>
        <position position="199"/>
    </location>
    <ligand>
        <name>[4Fe-4S] cluster</name>
        <dbReference type="ChEBI" id="CHEBI:49883"/>
        <note>ligand shared between dimeric partners</note>
    </ligand>
</feature>
<feature type="modified residue" description="N-acetylmethionine" evidence="2 5 7 8 9">
    <location>
        <position position="1"/>
    </location>
</feature>
<feature type="sequence variant" id="VAR_061353" description="In dbSNP:rs57822546.">
    <original>T</original>
    <variation>A</variation>
    <location>
        <position position="200"/>
    </location>
</feature>
<feature type="sequence variant" id="VAR_050099" description="In dbSNP:rs35030308.">
    <original>P</original>
    <variation>S</variation>
    <location>
        <position position="250"/>
    </location>
</feature>
<feature type="sequence variant" id="VAR_050100" description="In dbSNP:rs34028164.">
    <original>T</original>
    <variation>M</variation>
    <location>
        <position position="266"/>
    </location>
</feature>
<feature type="sequence conflict" description="In Ref. 2; BAA91471." evidence="6" ref="2">
    <original>F</original>
    <variation>S</variation>
    <location>
        <position position="242"/>
    </location>
</feature>
<gene>
    <name evidence="2" type="primary">NUBP2</name>
</gene>
<evidence type="ECO:0000250" key="1">
    <source>
        <dbReference type="UniProtKB" id="Q9R061"/>
    </source>
</evidence>
<evidence type="ECO:0000255" key="2">
    <source>
        <dbReference type="HAMAP-Rule" id="MF_03039"/>
    </source>
</evidence>
<evidence type="ECO:0000269" key="3">
    <source>
    </source>
</evidence>
<evidence type="ECO:0000269" key="4">
    <source>
    </source>
</evidence>
<evidence type="ECO:0000269" key="5">
    <source ref="6"/>
</evidence>
<evidence type="ECO:0000305" key="6"/>
<evidence type="ECO:0007744" key="7">
    <source>
    </source>
</evidence>
<evidence type="ECO:0007744" key="8">
    <source>
    </source>
</evidence>
<evidence type="ECO:0007744" key="9">
    <source>
    </source>
</evidence>